<evidence type="ECO:0000255" key="1"/>
<evidence type="ECO:0000305" key="2"/>
<comment type="function">
    <text>One gap junction consists of a cluster of closely packed pairs of transmembrane channels, the connexons, through which materials of low MW diffuse from one cell to a neighboring cell.</text>
</comment>
<comment type="subunit">
    <text>A connexon is composed of a hexamer of connexins.</text>
</comment>
<comment type="subcellular location">
    <subcellularLocation>
        <location>Cell membrane</location>
        <topology>Multi-pass membrane protein</topology>
    </subcellularLocation>
    <subcellularLocation>
        <location>Cell junction</location>
        <location>Gap junction</location>
    </subcellularLocation>
</comment>
<comment type="tissue specificity">
    <text>Retinal specific.</text>
</comment>
<comment type="similarity">
    <text evidence="2">Belongs to the connexin family. Delta-type subfamily.</text>
</comment>
<reference key="1">
    <citation type="journal article" date="1996" name="Mol. Biol. Cell">
        <title>Connexin 35: a gap-junctional protein expressed preferentially in the skate retina.</title>
        <authorList>
            <person name="O'Brien J."/>
            <person name="Al-Ubaidi M.R."/>
            <person name="Ripps H."/>
        </authorList>
    </citation>
    <scope>NUCLEOTIDE SEQUENCE [GENOMIC DNA]</scope>
    <source>
        <tissue>Retina</tissue>
    </source>
</reference>
<feature type="chain" id="PRO_0000057838" description="Gap junction delta-2 protein">
    <location>
        <begin position="1"/>
        <end position="302"/>
    </location>
</feature>
<feature type="topological domain" description="Cytoplasmic" evidence="1">
    <location>
        <begin position="1"/>
        <end position="19"/>
    </location>
</feature>
<feature type="transmembrane region" description="Helical" evidence="1">
    <location>
        <begin position="20"/>
        <end position="42"/>
    </location>
</feature>
<feature type="topological domain" description="Extracellular" evidence="1">
    <location>
        <begin position="43"/>
        <end position="75"/>
    </location>
</feature>
<feature type="transmembrane region" description="Helical" evidence="1">
    <location>
        <begin position="76"/>
        <end position="98"/>
    </location>
</feature>
<feature type="topological domain" description="Cytoplasmic" evidence="1">
    <location>
        <begin position="99"/>
        <end position="177"/>
    </location>
</feature>
<feature type="transmembrane region" description="Helical" evidence="1">
    <location>
        <begin position="178"/>
        <end position="200"/>
    </location>
</feature>
<feature type="topological domain" description="Extracellular" evidence="1">
    <location>
        <begin position="201"/>
        <end position="232"/>
    </location>
</feature>
<feature type="transmembrane region" description="Helical" evidence="1">
    <location>
        <begin position="233"/>
        <end position="255"/>
    </location>
</feature>
<feature type="topological domain" description="Cytoplasmic" evidence="1">
    <location>
        <begin position="256"/>
        <end position="302"/>
    </location>
</feature>
<organism>
    <name type="scientific">Leucoraja erinaceus</name>
    <name type="common">Little skate</name>
    <name type="synonym">Raja erinacea</name>
    <dbReference type="NCBI Taxonomy" id="7782"/>
    <lineage>
        <taxon>Eukaryota</taxon>
        <taxon>Metazoa</taxon>
        <taxon>Chordata</taxon>
        <taxon>Craniata</taxon>
        <taxon>Vertebrata</taxon>
        <taxon>Chondrichthyes</taxon>
        <taxon>Elasmobranchii</taxon>
        <taxon>Batoidea</taxon>
        <taxon>Rajiformes</taxon>
        <taxon>Rajidae</taxon>
        <taxon>Leucoraja</taxon>
    </lineage>
</organism>
<accession>P69998</accession>
<accession>Q91323</accession>
<accession>Q91324</accession>
<accession>Q92107</accession>
<sequence>MGEWTILERLLEAAVQQHSTMIGRILLTVVVIFRILVVAIVGETVYDDEQTMFVCNTLQPGCNQACYDKAFPISHIRYWVFQIIMVCTPSLCFITYSVHQSSKQRERQYSTVFITLDKDKKREDNKIKNTTVNGVLQNSEFFTKEMQSDFLEVKEMQNSAARNSKMSKIRRQEGISRFYIIQVVFRNALEIGFLMGQYFLYGFKVPSMYECNRYPCVKMVECYVSRPTEKTVFLVFMFAVSGLCVILNLAELNHLGWRKIKTAVRGAQERRKSIYEIRNKDSPHRIGVPNFGRTQSSDSAYV</sequence>
<protein>
    <recommendedName>
        <fullName>Gap junction delta-2 protein</fullName>
    </recommendedName>
    <alternativeName>
        <fullName>Connexin-35</fullName>
        <shortName>Cx35</shortName>
    </alternativeName>
    <alternativeName>
        <fullName>Gap junction alpha-9 protein</fullName>
    </alternativeName>
</protein>
<keyword id="KW-0965">Cell junction</keyword>
<keyword id="KW-1003">Cell membrane</keyword>
<keyword id="KW-0303">Gap junction</keyword>
<keyword id="KW-0472">Membrane</keyword>
<keyword id="KW-0812">Transmembrane</keyword>
<keyword id="KW-1133">Transmembrane helix</keyword>
<name>CXD2_LEUER</name>
<dbReference type="EMBL" id="U43288">
    <property type="protein sequence ID" value="AAB09720.1"/>
    <property type="molecule type" value="Genomic_DNA"/>
</dbReference>
<dbReference type="EMBL" id="U43289">
    <property type="protein sequence ID" value="AAB09721.1"/>
    <property type="molecule type" value="Genomic_DNA"/>
</dbReference>
<dbReference type="SMR" id="P69998"/>
<dbReference type="GO" id="GO:0005922">
    <property type="term" value="C:connexin complex"/>
    <property type="evidence" value="ECO:0007669"/>
    <property type="project" value="InterPro"/>
</dbReference>
<dbReference type="GO" id="GO:0005243">
    <property type="term" value="F:gap junction channel activity"/>
    <property type="evidence" value="ECO:0007669"/>
    <property type="project" value="TreeGrafter"/>
</dbReference>
<dbReference type="GO" id="GO:0007267">
    <property type="term" value="P:cell-cell signaling"/>
    <property type="evidence" value="ECO:0007669"/>
    <property type="project" value="TreeGrafter"/>
</dbReference>
<dbReference type="FunFam" id="1.20.1440.80:FF:000003">
    <property type="entry name" value="Gap junction protein"/>
    <property type="match status" value="1"/>
</dbReference>
<dbReference type="Gene3D" id="1.20.1440.80">
    <property type="entry name" value="Gap junction channel protein cysteine-rich domain"/>
    <property type="match status" value="1"/>
</dbReference>
<dbReference type="InterPro" id="IPR000500">
    <property type="entry name" value="Connexin"/>
</dbReference>
<dbReference type="InterPro" id="IPR019570">
    <property type="entry name" value="Connexin_CCC"/>
</dbReference>
<dbReference type="InterPro" id="IPR017990">
    <property type="entry name" value="Connexin_CS"/>
</dbReference>
<dbReference type="InterPro" id="IPR013092">
    <property type="entry name" value="Connexin_N"/>
</dbReference>
<dbReference type="InterPro" id="IPR038359">
    <property type="entry name" value="Connexin_N_sf"/>
</dbReference>
<dbReference type="PANTHER" id="PTHR11984">
    <property type="entry name" value="CONNEXIN"/>
    <property type="match status" value="1"/>
</dbReference>
<dbReference type="PANTHER" id="PTHR11984:SF32">
    <property type="entry name" value="GAP JUNCTION DELTA-2 PROTEIN"/>
    <property type="match status" value="1"/>
</dbReference>
<dbReference type="Pfam" id="PF00029">
    <property type="entry name" value="Connexin"/>
    <property type="match status" value="1"/>
</dbReference>
<dbReference type="PRINTS" id="PR00206">
    <property type="entry name" value="CONNEXIN"/>
</dbReference>
<dbReference type="SMART" id="SM00037">
    <property type="entry name" value="CNX"/>
    <property type="match status" value="1"/>
</dbReference>
<dbReference type="SMART" id="SM01089">
    <property type="entry name" value="Connexin_CCC"/>
    <property type="match status" value="1"/>
</dbReference>
<dbReference type="PROSITE" id="PS00407">
    <property type="entry name" value="CONNEXINS_1"/>
    <property type="match status" value="1"/>
</dbReference>
<dbReference type="PROSITE" id="PS00408">
    <property type="entry name" value="CONNEXINS_2"/>
    <property type="match status" value="1"/>
</dbReference>
<proteinExistence type="evidence at transcript level"/>